<evidence type="ECO:0000255" key="1">
    <source>
        <dbReference type="HAMAP-Rule" id="MF_01396"/>
    </source>
</evidence>
<sequence>MDAEAAKMIGAGLAAIGMIGSGIGVGNIWANLIATVGRNPAAKSTVELYGWIGFAVTEAIALFALVVALILLFAA</sequence>
<keyword id="KW-0066">ATP synthesis</keyword>
<keyword id="KW-0997">Cell inner membrane</keyword>
<keyword id="KW-1003">Cell membrane</keyword>
<keyword id="KW-0138">CF(0)</keyword>
<keyword id="KW-0375">Hydrogen ion transport</keyword>
<keyword id="KW-0406">Ion transport</keyword>
<keyword id="KW-0446">Lipid-binding</keyword>
<keyword id="KW-0472">Membrane</keyword>
<keyword id="KW-1185">Reference proteome</keyword>
<keyword id="KW-0812">Transmembrane</keyword>
<keyword id="KW-1133">Transmembrane helix</keyword>
<keyword id="KW-0813">Transport</keyword>
<accession>Q2RPA5</accession>
<protein>
    <recommendedName>
        <fullName evidence="1">ATP synthase subunit c</fullName>
    </recommendedName>
    <alternativeName>
        <fullName evidence="1">ATP synthase F(0) sector subunit c</fullName>
    </alternativeName>
    <alternativeName>
        <fullName evidence="1">F-type ATPase subunit c</fullName>
        <shortName evidence="1">F-ATPase subunit c</shortName>
    </alternativeName>
    <alternativeName>
        <fullName evidence="1">Lipid-binding protein</fullName>
    </alternativeName>
</protein>
<dbReference type="EMBL" id="CP000230">
    <property type="protein sequence ID" value="ABC24040.1"/>
    <property type="molecule type" value="Genomic_DNA"/>
</dbReference>
<dbReference type="RefSeq" id="WP_011390993.1">
    <property type="nucleotide sequence ID" value="NC_007643.1"/>
</dbReference>
<dbReference type="RefSeq" id="YP_428327.1">
    <property type="nucleotide sequence ID" value="NC_007643.1"/>
</dbReference>
<dbReference type="SMR" id="Q2RPA5"/>
<dbReference type="STRING" id="269796.Rru_A3245"/>
<dbReference type="DNASU" id="3836692"/>
<dbReference type="EnsemblBacteria" id="ABC24040">
    <property type="protein sequence ID" value="ABC24040"/>
    <property type="gene ID" value="Rru_A3245"/>
</dbReference>
<dbReference type="KEGG" id="rru:Rru_A3245"/>
<dbReference type="PATRIC" id="fig|269796.9.peg.3359"/>
<dbReference type="eggNOG" id="COG0636">
    <property type="taxonomic scope" value="Bacteria"/>
</dbReference>
<dbReference type="HOGENOM" id="CLU_148047_4_1_5"/>
<dbReference type="Proteomes" id="UP000001929">
    <property type="component" value="Chromosome"/>
</dbReference>
<dbReference type="GO" id="GO:0005886">
    <property type="term" value="C:plasma membrane"/>
    <property type="evidence" value="ECO:0007669"/>
    <property type="project" value="UniProtKB-SubCell"/>
</dbReference>
<dbReference type="GO" id="GO:0045259">
    <property type="term" value="C:proton-transporting ATP synthase complex"/>
    <property type="evidence" value="ECO:0007669"/>
    <property type="project" value="UniProtKB-KW"/>
</dbReference>
<dbReference type="GO" id="GO:0033177">
    <property type="term" value="C:proton-transporting two-sector ATPase complex, proton-transporting domain"/>
    <property type="evidence" value="ECO:0007669"/>
    <property type="project" value="InterPro"/>
</dbReference>
<dbReference type="GO" id="GO:0008289">
    <property type="term" value="F:lipid binding"/>
    <property type="evidence" value="ECO:0007669"/>
    <property type="project" value="UniProtKB-KW"/>
</dbReference>
<dbReference type="GO" id="GO:0046933">
    <property type="term" value="F:proton-transporting ATP synthase activity, rotational mechanism"/>
    <property type="evidence" value="ECO:0007669"/>
    <property type="project" value="UniProtKB-UniRule"/>
</dbReference>
<dbReference type="CDD" id="cd18182">
    <property type="entry name" value="ATP-synt_Fo_c_ATP5G3"/>
    <property type="match status" value="1"/>
</dbReference>
<dbReference type="Gene3D" id="1.20.20.10">
    <property type="entry name" value="F1F0 ATP synthase subunit C"/>
    <property type="match status" value="1"/>
</dbReference>
<dbReference type="HAMAP" id="MF_01396">
    <property type="entry name" value="ATP_synth_c_bact"/>
    <property type="match status" value="1"/>
</dbReference>
<dbReference type="InterPro" id="IPR000454">
    <property type="entry name" value="ATP_synth_F0_csu"/>
</dbReference>
<dbReference type="InterPro" id="IPR020537">
    <property type="entry name" value="ATP_synth_F0_csu_DDCD_BS"/>
</dbReference>
<dbReference type="InterPro" id="IPR038662">
    <property type="entry name" value="ATP_synth_F0_csu_sf"/>
</dbReference>
<dbReference type="InterPro" id="IPR002379">
    <property type="entry name" value="ATPase_proteolipid_c-like_dom"/>
</dbReference>
<dbReference type="InterPro" id="IPR035921">
    <property type="entry name" value="F/V-ATP_Csub_sf"/>
</dbReference>
<dbReference type="NCBIfam" id="NF005733">
    <property type="entry name" value="PRK07558.1"/>
    <property type="match status" value="1"/>
</dbReference>
<dbReference type="PANTHER" id="PTHR10031">
    <property type="entry name" value="ATP SYNTHASE LIPID-BINDING PROTEIN, MITOCHONDRIAL"/>
    <property type="match status" value="1"/>
</dbReference>
<dbReference type="PANTHER" id="PTHR10031:SF0">
    <property type="entry name" value="ATPASE PROTEIN 9"/>
    <property type="match status" value="1"/>
</dbReference>
<dbReference type="Pfam" id="PF00137">
    <property type="entry name" value="ATP-synt_C"/>
    <property type="match status" value="1"/>
</dbReference>
<dbReference type="PRINTS" id="PR00124">
    <property type="entry name" value="ATPASEC"/>
</dbReference>
<dbReference type="SUPFAM" id="SSF81333">
    <property type="entry name" value="F1F0 ATP synthase subunit C"/>
    <property type="match status" value="1"/>
</dbReference>
<dbReference type="PROSITE" id="PS00605">
    <property type="entry name" value="ATPASE_C"/>
    <property type="match status" value="1"/>
</dbReference>
<gene>
    <name evidence="1" type="primary">atpE</name>
    <name type="ordered locus">Rru_A3245</name>
</gene>
<reference key="1">
    <citation type="journal article" date="2011" name="Stand. Genomic Sci.">
        <title>Complete genome sequence of Rhodospirillum rubrum type strain (S1).</title>
        <authorList>
            <person name="Munk A.C."/>
            <person name="Copeland A."/>
            <person name="Lucas S."/>
            <person name="Lapidus A."/>
            <person name="Del Rio T.G."/>
            <person name="Barry K."/>
            <person name="Detter J.C."/>
            <person name="Hammon N."/>
            <person name="Israni S."/>
            <person name="Pitluck S."/>
            <person name="Brettin T."/>
            <person name="Bruce D."/>
            <person name="Han C."/>
            <person name="Tapia R."/>
            <person name="Gilna P."/>
            <person name="Schmutz J."/>
            <person name="Larimer F."/>
            <person name="Land M."/>
            <person name="Kyrpides N.C."/>
            <person name="Mavromatis K."/>
            <person name="Richardson P."/>
            <person name="Rohde M."/>
            <person name="Goeker M."/>
            <person name="Klenk H.P."/>
            <person name="Zhang Y."/>
            <person name="Roberts G.P."/>
            <person name="Reslewic S."/>
            <person name="Schwartz D.C."/>
        </authorList>
    </citation>
    <scope>NUCLEOTIDE SEQUENCE [LARGE SCALE GENOMIC DNA]</scope>
    <source>
        <strain>ATCC 11170 / ATH 1.1.1 / DSM 467 / LMG 4362 / NCIMB 8255 / S1</strain>
    </source>
</reference>
<organism>
    <name type="scientific">Rhodospirillum rubrum (strain ATCC 11170 / ATH 1.1.1 / DSM 467 / LMG 4362 / NCIMB 8255 / S1)</name>
    <dbReference type="NCBI Taxonomy" id="269796"/>
    <lineage>
        <taxon>Bacteria</taxon>
        <taxon>Pseudomonadati</taxon>
        <taxon>Pseudomonadota</taxon>
        <taxon>Alphaproteobacteria</taxon>
        <taxon>Rhodospirillales</taxon>
        <taxon>Rhodospirillaceae</taxon>
        <taxon>Rhodospirillum</taxon>
    </lineage>
</organism>
<comment type="function">
    <text evidence="1">F(1)F(0) ATP synthase produces ATP from ADP in the presence of a proton or sodium gradient. F-type ATPases consist of two structural domains, F(1) containing the extramembraneous catalytic core and F(0) containing the membrane proton channel, linked together by a central stalk and a peripheral stalk. During catalysis, ATP synthesis in the catalytic domain of F(1) is coupled via a rotary mechanism of the central stalk subunits to proton translocation.</text>
</comment>
<comment type="function">
    <text evidence="1">Key component of the F(0) channel; it plays a direct role in translocation across the membrane. A homomeric c-ring of between 10-14 subunits forms the central stalk rotor element with the F(1) delta and epsilon subunits.</text>
</comment>
<comment type="subunit">
    <text evidence="1">F-type ATPases have 2 components, F(1) - the catalytic core - and F(0) - the membrane proton channel. F(1) has five subunits: alpha(3), beta(3), gamma(1), delta(1), epsilon(1). F(0) has four main subunits: a(1), b(1), b'(1) and c(10-14). The alpha and beta chains form an alternating ring which encloses part of the gamma chain. F(1) is attached to F(0) by a central stalk formed by the gamma and epsilon chains, while a peripheral stalk is formed by the delta, b and b' chains.</text>
</comment>
<comment type="subcellular location">
    <subcellularLocation>
        <location evidence="1">Cell inner membrane</location>
        <topology evidence="1">Multi-pass membrane protein</topology>
    </subcellularLocation>
</comment>
<comment type="similarity">
    <text evidence="1">Belongs to the ATPase C chain family.</text>
</comment>
<feature type="chain" id="PRO_1000184448" description="ATP synthase subunit c">
    <location>
        <begin position="1"/>
        <end position="75"/>
    </location>
</feature>
<feature type="transmembrane region" description="Helical" evidence="1">
    <location>
        <begin position="9"/>
        <end position="29"/>
    </location>
</feature>
<feature type="transmembrane region" description="Helical" evidence="1">
    <location>
        <begin position="52"/>
        <end position="72"/>
    </location>
</feature>
<feature type="site" description="Reversibly protonated during proton transport" evidence="1">
    <location>
        <position position="58"/>
    </location>
</feature>
<proteinExistence type="inferred from homology"/>
<name>ATPL_RHORT</name>